<comment type="function">
    <text evidence="1">Probably mediates the hydrolysis of some nucleoside diphosphate derivatives.</text>
</comment>
<comment type="cofactor">
    <cofactor evidence="1">
        <name>Mn(2+)</name>
        <dbReference type="ChEBI" id="CHEBI:29035"/>
    </cofactor>
    <cofactor evidence="1">
        <name>Mg(2+)</name>
        <dbReference type="ChEBI" id="CHEBI:18420"/>
    </cofactor>
</comment>
<comment type="similarity">
    <text evidence="1">Belongs to the Nudix hydrolase family. PCD1 subfamily.</text>
</comment>
<sequence>MENSSLTLDDFLSRFQLLRPQVNGETLNRRQAAVLIPVVRRARPGLLLTQRSARLRKHAGQVAFPGGAVDSSDASLIAAALREAQEEVAIPPESVEVIGVLPPVDSVTGFQVTPVVGIIPPNLHYHASEDEVASVFEMPLSEALRLGRYHPLDIYRRGDSHRVWLSWYEHYFVWGMTAGIIRELALQIGVRP</sequence>
<protein>
    <recommendedName>
        <fullName evidence="1">Uncharacterized Nudix hydrolase NudL</fullName>
        <ecNumber evidence="1">3.6.1.-</ecNumber>
    </recommendedName>
</protein>
<evidence type="ECO:0000255" key="1">
    <source>
        <dbReference type="HAMAP-Rule" id="MF_01592"/>
    </source>
</evidence>
<dbReference type="EC" id="3.6.1.-" evidence="1"/>
<dbReference type="EMBL" id="CP000822">
    <property type="protein sequence ID" value="ABV12308.1"/>
    <property type="molecule type" value="Genomic_DNA"/>
</dbReference>
<dbReference type="RefSeq" id="WP_012132061.1">
    <property type="nucleotide sequence ID" value="NC_009792.1"/>
</dbReference>
<dbReference type="SMR" id="A8AFP5"/>
<dbReference type="STRING" id="290338.CKO_01167"/>
<dbReference type="GeneID" id="45135300"/>
<dbReference type="KEGG" id="cko:CKO_01167"/>
<dbReference type="HOGENOM" id="CLU_040940_5_2_6"/>
<dbReference type="OrthoDB" id="9802805at2"/>
<dbReference type="Proteomes" id="UP000008148">
    <property type="component" value="Chromosome"/>
</dbReference>
<dbReference type="GO" id="GO:0010945">
    <property type="term" value="F:coenzyme A diphosphatase activity"/>
    <property type="evidence" value="ECO:0007669"/>
    <property type="project" value="InterPro"/>
</dbReference>
<dbReference type="GO" id="GO:0000287">
    <property type="term" value="F:magnesium ion binding"/>
    <property type="evidence" value="ECO:0007669"/>
    <property type="project" value="UniProtKB-UniRule"/>
</dbReference>
<dbReference type="GO" id="GO:0030145">
    <property type="term" value="F:manganese ion binding"/>
    <property type="evidence" value="ECO:0007669"/>
    <property type="project" value="UniProtKB-UniRule"/>
</dbReference>
<dbReference type="GO" id="GO:0009132">
    <property type="term" value="P:nucleoside diphosphate metabolic process"/>
    <property type="evidence" value="ECO:0007669"/>
    <property type="project" value="InterPro"/>
</dbReference>
<dbReference type="CDD" id="cd03426">
    <property type="entry name" value="NUDIX_CoAse_Nudt7"/>
    <property type="match status" value="1"/>
</dbReference>
<dbReference type="Gene3D" id="3.90.79.10">
    <property type="entry name" value="Nucleoside Triphosphate Pyrophosphohydrolase"/>
    <property type="match status" value="1"/>
</dbReference>
<dbReference type="HAMAP" id="MF_01592">
    <property type="entry name" value="Nudix_NudL"/>
    <property type="match status" value="1"/>
</dbReference>
<dbReference type="InterPro" id="IPR045121">
    <property type="entry name" value="CoAse"/>
</dbReference>
<dbReference type="InterPro" id="IPR015797">
    <property type="entry name" value="NUDIX_hydrolase-like_dom_sf"/>
</dbReference>
<dbReference type="InterPro" id="IPR000086">
    <property type="entry name" value="NUDIX_hydrolase_dom"/>
</dbReference>
<dbReference type="InterPro" id="IPR000059">
    <property type="entry name" value="NUDIX_hydrolase_NudL_CS"/>
</dbReference>
<dbReference type="InterPro" id="IPR023735">
    <property type="entry name" value="Nudix_NudL"/>
</dbReference>
<dbReference type="NCBIfam" id="NF007980">
    <property type="entry name" value="PRK10707.1"/>
    <property type="match status" value="1"/>
</dbReference>
<dbReference type="PANTHER" id="PTHR12992:SF11">
    <property type="entry name" value="MITOCHONDRIAL COENZYME A DIPHOSPHATASE NUDT8"/>
    <property type="match status" value="1"/>
</dbReference>
<dbReference type="PANTHER" id="PTHR12992">
    <property type="entry name" value="NUDIX HYDROLASE"/>
    <property type="match status" value="1"/>
</dbReference>
<dbReference type="Pfam" id="PF00293">
    <property type="entry name" value="NUDIX"/>
    <property type="match status" value="1"/>
</dbReference>
<dbReference type="SUPFAM" id="SSF55811">
    <property type="entry name" value="Nudix"/>
    <property type="match status" value="1"/>
</dbReference>
<dbReference type="PROSITE" id="PS51462">
    <property type="entry name" value="NUDIX"/>
    <property type="match status" value="1"/>
</dbReference>
<dbReference type="PROSITE" id="PS01293">
    <property type="entry name" value="NUDIX_COA"/>
    <property type="match status" value="1"/>
</dbReference>
<reference key="1">
    <citation type="submission" date="2007-08" db="EMBL/GenBank/DDBJ databases">
        <authorList>
            <consortium name="The Citrobacter koseri Genome Sequencing Project"/>
            <person name="McClelland M."/>
            <person name="Sanderson E.K."/>
            <person name="Porwollik S."/>
            <person name="Spieth J."/>
            <person name="Clifton W.S."/>
            <person name="Latreille P."/>
            <person name="Courtney L."/>
            <person name="Wang C."/>
            <person name="Pepin K."/>
            <person name="Bhonagiri V."/>
            <person name="Nash W."/>
            <person name="Johnson M."/>
            <person name="Thiruvilangam P."/>
            <person name="Wilson R."/>
        </authorList>
    </citation>
    <scope>NUCLEOTIDE SEQUENCE [LARGE SCALE GENOMIC DNA]</scope>
    <source>
        <strain>ATCC BAA-895 / CDC 4225-83 / SGSC4696</strain>
    </source>
</reference>
<organism>
    <name type="scientific">Citrobacter koseri (strain ATCC BAA-895 / CDC 4225-83 / SGSC4696)</name>
    <dbReference type="NCBI Taxonomy" id="290338"/>
    <lineage>
        <taxon>Bacteria</taxon>
        <taxon>Pseudomonadati</taxon>
        <taxon>Pseudomonadota</taxon>
        <taxon>Gammaproteobacteria</taxon>
        <taxon>Enterobacterales</taxon>
        <taxon>Enterobacteriaceae</taxon>
        <taxon>Citrobacter</taxon>
    </lineage>
</organism>
<feature type="chain" id="PRO_0000315568" description="Uncharacterized Nudix hydrolase NudL">
    <location>
        <begin position="1"/>
        <end position="192"/>
    </location>
</feature>
<feature type="domain" description="Nudix hydrolase" evidence="1">
    <location>
        <begin position="29"/>
        <end position="160"/>
    </location>
</feature>
<feature type="short sequence motif" description="Nudix box">
    <location>
        <begin position="67"/>
        <end position="89"/>
    </location>
</feature>
<feature type="binding site" evidence="1">
    <location>
        <position position="83"/>
    </location>
    <ligand>
        <name>Mg(2+)</name>
        <dbReference type="ChEBI" id="CHEBI:18420"/>
    </ligand>
</feature>
<feature type="binding site" evidence="1">
    <location>
        <position position="87"/>
    </location>
    <ligand>
        <name>Mg(2+)</name>
        <dbReference type="ChEBI" id="CHEBI:18420"/>
    </ligand>
</feature>
<proteinExistence type="inferred from homology"/>
<gene>
    <name evidence="1" type="primary">nudL</name>
    <name type="ordered locus">CKO_01167</name>
</gene>
<accession>A8AFP5</accession>
<keyword id="KW-0378">Hydrolase</keyword>
<keyword id="KW-0460">Magnesium</keyword>
<keyword id="KW-0464">Manganese</keyword>
<keyword id="KW-0479">Metal-binding</keyword>
<keyword id="KW-1185">Reference proteome</keyword>
<name>NUDL_CITK8</name>